<organism>
    <name type="scientific">Centruroides margaritatus</name>
    <name type="common">Central American bark Scorpion</name>
    <dbReference type="NCBI Taxonomy" id="29018"/>
    <lineage>
        <taxon>Eukaryota</taxon>
        <taxon>Metazoa</taxon>
        <taxon>Ecdysozoa</taxon>
        <taxon>Arthropoda</taxon>
        <taxon>Chelicerata</taxon>
        <taxon>Arachnida</taxon>
        <taxon>Scorpiones</taxon>
        <taxon>Buthida</taxon>
        <taxon>Buthoidea</taxon>
        <taxon>Buthidae</taxon>
        <taxon>Centruroides</taxon>
    </lineage>
</organism>
<sequence>KCRECGNTSPSCYFSGNCVNGKCVCPA</sequence>
<name>KA321_CENMA</name>
<keyword id="KW-0903">Direct protein sequencing</keyword>
<keyword id="KW-1015">Disulfide bond</keyword>
<keyword id="KW-0872">Ion channel impairing toxin</keyword>
<keyword id="KW-0632">Potassium channel impairing toxin</keyword>
<keyword id="KW-0964">Secreted</keyword>
<keyword id="KW-0800">Toxin</keyword>
<dbReference type="SMR" id="C0HM22"/>
<dbReference type="GO" id="GO:0005576">
    <property type="term" value="C:extracellular region"/>
    <property type="evidence" value="ECO:0007669"/>
    <property type="project" value="UniProtKB-SubCell"/>
</dbReference>
<dbReference type="GO" id="GO:0015459">
    <property type="term" value="F:potassium channel regulator activity"/>
    <property type="evidence" value="ECO:0007669"/>
    <property type="project" value="UniProtKB-KW"/>
</dbReference>
<dbReference type="GO" id="GO:0090729">
    <property type="term" value="F:toxin activity"/>
    <property type="evidence" value="ECO:0007669"/>
    <property type="project" value="UniProtKB-KW"/>
</dbReference>
<comment type="function">
    <text evidence="2">Blocker of voltage-gated potassium channels (Ref.1). Inhibits voltage-gated potassium channels Kv1.2/KCNA2 (Kd=0.96 nM) and Kv1.3/KCNA3 (Kd=1.3 nM) (Ref.1). Does not inhibit Kv1.1/KCNA1, Kv1.5/KCNA5, Kv11.1/KCNH2/ERG1, KCa1.1/KCNMA1, KCa3.1/KCNN4, NaV1.5/SCN5A, NaV1.4/SCN4A or HV1/HVCN1 (Ref.1). Strongly inhibits the expression of the activation markers interleukin-2 receptor and CD40 ligand/CD40LG in anti-CD3-activated CD4(+) TEM lymphocytes (Ref.1).</text>
</comment>
<comment type="subcellular location">
    <subcellularLocation>
        <location evidence="2">Secreted</location>
    </subcellularLocation>
</comment>
<comment type="tissue specificity">
    <text evidence="5">Expressed by the venom gland.</text>
</comment>
<comment type="mass spectrometry"/>
<comment type="similarity">
    <text evidence="4">Belongs to the short scorpion toxin superfamily. Potassium channel inhibitor family.</text>
</comment>
<accession>C0HM22</accession>
<reference key="1">
    <citation type="submission" date="2022-02" db="UniProtKB">
        <title>Cm28, a scorpion toxin having unique primary structure inhibits KV1.2 and KV1.3 with high affinity.</title>
        <authorList>
            <person name="Nasseem M.U."/>
            <person name="Carcamo-Noriega E."/>
            <person name="Beltran-Vidal J."/>
            <person name="Borrego Terrazas J."/>
            <person name="Szanto T.G."/>
            <person name="Zamudio F.Z."/>
            <person name="Delgado-Prudencio G."/>
            <person name="Possani L.D."/>
            <person name="Panyi G."/>
        </authorList>
    </citation>
    <scope>PROTEIN SEQUENCE</scope>
    <scope>FUNCTION</scope>
    <scope>SUBCELLULAR LOCATION</scope>
    <scope>TISSUE SPECIFICITY</scope>
    <scope>MASS SPECTROMETRY</scope>
</reference>
<protein>
    <recommendedName>
        <fullName evidence="3">Potassium channel toxin alpha-KTx 32.1</fullName>
    </recommendedName>
</protein>
<feature type="chain" id="PRO_0000456621" description="Potassium channel toxin alpha-KTx 32.1">
    <location>
        <begin position="1"/>
        <end position="27"/>
    </location>
</feature>
<feature type="disulfide bond" evidence="1">
    <location>
        <begin position="5"/>
        <end position="18"/>
    </location>
</feature>
<feature type="disulfide bond" evidence="1">
    <location>
        <begin position="12"/>
        <end position="25"/>
    </location>
</feature>
<feature type="non-terminal residue" evidence="4">
    <location>
        <position position="1"/>
    </location>
</feature>
<feature type="non-terminal residue" evidence="2">
    <location>
        <position position="27"/>
    </location>
</feature>
<proteinExistence type="evidence at protein level"/>
<evidence type="ECO:0000250" key="1">
    <source>
        <dbReference type="UniProtKB" id="Q86BX0"/>
    </source>
</evidence>
<evidence type="ECO:0000269" key="2">
    <source ref="1"/>
</evidence>
<evidence type="ECO:0000303" key="3">
    <source ref="1"/>
</evidence>
<evidence type="ECO:0000305" key="4"/>
<evidence type="ECO:0000305" key="5">
    <source ref="1"/>
</evidence>